<accession>Q98IV5</accession>
<evidence type="ECO:0000255" key="1">
    <source>
        <dbReference type="HAMAP-Rule" id="MF_00600"/>
    </source>
</evidence>
<gene>
    <name evidence="1" type="primary">groEL1</name>
    <name evidence="1" type="synonym">groL1</name>
    <name type="ordered locus">mll2232</name>
</gene>
<reference key="1">
    <citation type="journal article" date="2000" name="DNA Res.">
        <title>Complete genome structure of the nitrogen-fixing symbiotic bacterium Mesorhizobium loti.</title>
        <authorList>
            <person name="Kaneko T."/>
            <person name="Nakamura Y."/>
            <person name="Sato S."/>
            <person name="Asamizu E."/>
            <person name="Kato T."/>
            <person name="Sasamoto S."/>
            <person name="Watanabe A."/>
            <person name="Idesawa K."/>
            <person name="Ishikawa A."/>
            <person name="Kawashima K."/>
            <person name="Kimura T."/>
            <person name="Kishida Y."/>
            <person name="Kiyokawa C."/>
            <person name="Kohara M."/>
            <person name="Matsumoto M."/>
            <person name="Matsuno A."/>
            <person name="Mochizuki Y."/>
            <person name="Nakayama S."/>
            <person name="Nakazaki N."/>
            <person name="Shimpo S."/>
            <person name="Sugimoto M."/>
            <person name="Takeuchi C."/>
            <person name="Yamada M."/>
            <person name="Tabata S."/>
        </authorList>
    </citation>
    <scope>NUCLEOTIDE SEQUENCE [LARGE SCALE GENOMIC DNA]</scope>
    <source>
        <strain>LMG 29417 / CECT 9101 / MAFF 303099</strain>
    </source>
</reference>
<name>CH601_RHILO</name>
<protein>
    <recommendedName>
        <fullName evidence="1">Chaperonin GroEL 1</fullName>
        <ecNumber evidence="1">5.6.1.7</ecNumber>
    </recommendedName>
    <alternativeName>
        <fullName evidence="1">60 kDa chaperonin 1</fullName>
    </alternativeName>
    <alternativeName>
        <fullName evidence="1">Chaperonin-60 1</fullName>
        <shortName evidence="1">Cpn60 1</shortName>
    </alternativeName>
</protein>
<proteinExistence type="inferred from homology"/>
<comment type="function">
    <text evidence="1">Together with its co-chaperonin GroES, plays an essential role in assisting protein folding. The GroEL-GroES system forms a nano-cage that allows encapsulation of the non-native substrate proteins and provides a physical environment optimized to promote and accelerate protein folding.</text>
</comment>
<comment type="catalytic activity">
    <reaction evidence="1">
        <text>ATP + H2O + a folded polypeptide = ADP + phosphate + an unfolded polypeptide.</text>
        <dbReference type="EC" id="5.6.1.7"/>
    </reaction>
</comment>
<comment type="subunit">
    <text evidence="1">Forms a cylinder of 14 subunits composed of two heptameric rings stacked back-to-back. Interacts with the co-chaperonin GroES.</text>
</comment>
<comment type="subcellular location">
    <subcellularLocation>
        <location evidence="1">Cytoplasm</location>
    </subcellularLocation>
</comment>
<comment type="similarity">
    <text evidence="1">Belongs to the chaperonin (HSP60) family.</text>
</comment>
<dbReference type="EC" id="5.6.1.7" evidence="1"/>
<dbReference type="EMBL" id="BA000012">
    <property type="protein sequence ID" value="BAB49411.1"/>
    <property type="molecule type" value="Genomic_DNA"/>
</dbReference>
<dbReference type="SMR" id="Q98IV5"/>
<dbReference type="KEGG" id="mlo:mll2232"/>
<dbReference type="PATRIC" id="fig|266835.9.peg.1791"/>
<dbReference type="eggNOG" id="COG0459">
    <property type="taxonomic scope" value="Bacteria"/>
</dbReference>
<dbReference type="HOGENOM" id="CLU_016503_3_0_5"/>
<dbReference type="Proteomes" id="UP000000552">
    <property type="component" value="Chromosome"/>
</dbReference>
<dbReference type="GO" id="GO:0005737">
    <property type="term" value="C:cytoplasm"/>
    <property type="evidence" value="ECO:0007669"/>
    <property type="project" value="UniProtKB-SubCell"/>
</dbReference>
<dbReference type="GO" id="GO:0005524">
    <property type="term" value="F:ATP binding"/>
    <property type="evidence" value="ECO:0007669"/>
    <property type="project" value="UniProtKB-UniRule"/>
</dbReference>
<dbReference type="GO" id="GO:0140662">
    <property type="term" value="F:ATP-dependent protein folding chaperone"/>
    <property type="evidence" value="ECO:0007669"/>
    <property type="project" value="InterPro"/>
</dbReference>
<dbReference type="GO" id="GO:0016853">
    <property type="term" value="F:isomerase activity"/>
    <property type="evidence" value="ECO:0007669"/>
    <property type="project" value="UniProtKB-KW"/>
</dbReference>
<dbReference type="GO" id="GO:0051082">
    <property type="term" value="F:unfolded protein binding"/>
    <property type="evidence" value="ECO:0007669"/>
    <property type="project" value="UniProtKB-UniRule"/>
</dbReference>
<dbReference type="GO" id="GO:0042026">
    <property type="term" value="P:protein refolding"/>
    <property type="evidence" value="ECO:0007669"/>
    <property type="project" value="UniProtKB-UniRule"/>
</dbReference>
<dbReference type="CDD" id="cd03344">
    <property type="entry name" value="GroEL"/>
    <property type="match status" value="1"/>
</dbReference>
<dbReference type="FunFam" id="1.10.560.10:FF:000001">
    <property type="entry name" value="60 kDa chaperonin"/>
    <property type="match status" value="1"/>
</dbReference>
<dbReference type="FunFam" id="3.50.7.10:FF:000001">
    <property type="entry name" value="60 kDa chaperonin"/>
    <property type="match status" value="1"/>
</dbReference>
<dbReference type="Gene3D" id="3.50.7.10">
    <property type="entry name" value="GroEL"/>
    <property type="match status" value="1"/>
</dbReference>
<dbReference type="Gene3D" id="1.10.560.10">
    <property type="entry name" value="GroEL-like equatorial domain"/>
    <property type="match status" value="1"/>
</dbReference>
<dbReference type="Gene3D" id="3.30.260.10">
    <property type="entry name" value="TCP-1-like chaperonin intermediate domain"/>
    <property type="match status" value="1"/>
</dbReference>
<dbReference type="HAMAP" id="MF_00600">
    <property type="entry name" value="CH60"/>
    <property type="match status" value="1"/>
</dbReference>
<dbReference type="InterPro" id="IPR018370">
    <property type="entry name" value="Chaperonin_Cpn60_CS"/>
</dbReference>
<dbReference type="InterPro" id="IPR001844">
    <property type="entry name" value="Cpn60/GroEL"/>
</dbReference>
<dbReference type="InterPro" id="IPR002423">
    <property type="entry name" value="Cpn60/GroEL/TCP-1"/>
</dbReference>
<dbReference type="InterPro" id="IPR027409">
    <property type="entry name" value="GroEL-like_apical_dom_sf"/>
</dbReference>
<dbReference type="InterPro" id="IPR027413">
    <property type="entry name" value="GROEL-like_equatorial_sf"/>
</dbReference>
<dbReference type="InterPro" id="IPR027410">
    <property type="entry name" value="TCP-1-like_intermed_sf"/>
</dbReference>
<dbReference type="NCBIfam" id="TIGR02348">
    <property type="entry name" value="GroEL"/>
    <property type="match status" value="1"/>
</dbReference>
<dbReference type="NCBIfam" id="NF000592">
    <property type="entry name" value="PRK00013.1"/>
    <property type="match status" value="1"/>
</dbReference>
<dbReference type="NCBIfam" id="NF009487">
    <property type="entry name" value="PRK12849.1"/>
    <property type="match status" value="1"/>
</dbReference>
<dbReference type="NCBIfam" id="NF009488">
    <property type="entry name" value="PRK12850.1"/>
    <property type="match status" value="1"/>
</dbReference>
<dbReference type="NCBIfam" id="NF009489">
    <property type="entry name" value="PRK12851.1"/>
    <property type="match status" value="1"/>
</dbReference>
<dbReference type="PANTHER" id="PTHR45633">
    <property type="entry name" value="60 KDA HEAT SHOCK PROTEIN, MITOCHONDRIAL"/>
    <property type="match status" value="1"/>
</dbReference>
<dbReference type="Pfam" id="PF00118">
    <property type="entry name" value="Cpn60_TCP1"/>
    <property type="match status" value="1"/>
</dbReference>
<dbReference type="PRINTS" id="PR00298">
    <property type="entry name" value="CHAPERONIN60"/>
</dbReference>
<dbReference type="SUPFAM" id="SSF52029">
    <property type="entry name" value="GroEL apical domain-like"/>
    <property type="match status" value="1"/>
</dbReference>
<dbReference type="SUPFAM" id="SSF48592">
    <property type="entry name" value="GroEL equatorial domain-like"/>
    <property type="match status" value="1"/>
</dbReference>
<dbReference type="SUPFAM" id="SSF54849">
    <property type="entry name" value="GroEL-intermediate domain like"/>
    <property type="match status" value="1"/>
</dbReference>
<dbReference type="PROSITE" id="PS00296">
    <property type="entry name" value="CHAPERONINS_CPN60"/>
    <property type="match status" value="1"/>
</dbReference>
<feature type="chain" id="PRO_0000063494" description="Chaperonin GroEL 1">
    <location>
        <begin position="1"/>
        <end position="543"/>
    </location>
</feature>
<feature type="binding site" evidence="1">
    <location>
        <begin position="30"/>
        <end position="33"/>
    </location>
    <ligand>
        <name>ATP</name>
        <dbReference type="ChEBI" id="CHEBI:30616"/>
    </ligand>
</feature>
<feature type="binding site" evidence="1">
    <location>
        <position position="51"/>
    </location>
    <ligand>
        <name>ATP</name>
        <dbReference type="ChEBI" id="CHEBI:30616"/>
    </ligand>
</feature>
<feature type="binding site" evidence="1">
    <location>
        <begin position="87"/>
        <end position="91"/>
    </location>
    <ligand>
        <name>ATP</name>
        <dbReference type="ChEBI" id="CHEBI:30616"/>
    </ligand>
</feature>
<feature type="binding site" evidence="1">
    <location>
        <position position="415"/>
    </location>
    <ligand>
        <name>ATP</name>
        <dbReference type="ChEBI" id="CHEBI:30616"/>
    </ligand>
</feature>
<feature type="binding site" evidence="1">
    <location>
        <position position="496"/>
    </location>
    <ligand>
        <name>ATP</name>
        <dbReference type="ChEBI" id="CHEBI:30616"/>
    </ligand>
</feature>
<organism>
    <name type="scientific">Mesorhizobium japonicum (strain LMG 29417 / CECT 9101 / MAFF 303099)</name>
    <name type="common">Mesorhizobium loti (strain MAFF 303099)</name>
    <dbReference type="NCBI Taxonomy" id="266835"/>
    <lineage>
        <taxon>Bacteria</taxon>
        <taxon>Pseudomonadati</taxon>
        <taxon>Pseudomonadota</taxon>
        <taxon>Alphaproteobacteria</taxon>
        <taxon>Hyphomicrobiales</taxon>
        <taxon>Phyllobacteriaceae</taxon>
        <taxon>Mesorhizobium</taxon>
    </lineage>
</organism>
<sequence>MSAKEIKFATDARDRMLRGVEILTNAVKVTLGPKGRNVIIDKAYGAPRITKDGVTVAKEIELADKFENMGAQMVREVASKTNDLAGDGTTTATVLAASILREGAKLVAAGMNPMDLKRGIDQAVAAVVVEIKAKAKKVKSSAEIAQVGTIAANGDATVGAMIAKAMDKVGNDGVITVEEAKTAETELDVVEGMQFDRGYLSPYFVTNADKMRVELEEPYVLIHEKKLGNLQAMLPILEAVVQSGRPLLIISEDVEGEALATLVVNKLRGGLKVAAVKAPGFGDRRKAMLEDIAVLTAGQMISEDLGIKLENVTIEMLGRAKRVLIEKDTTTIIDGAGTKATIQARVAQIKGQIEETTSDYDKEKLQERLAKLSGGVAVIRVGGVTESEVKEKKDRIDDALNATRAAVEEGIVPGGGVALLRARSALSGLNGANADVTAGISIVLRALEAPIRQIAENSGVEGSIVVGKLADSKDHNLGFDAQNETYVDMIKAGIVDPAKVVRTALQDAGSIAALLITAEAMITDIPAKDAAPAGGGGGGMGGY</sequence>
<keyword id="KW-0067">ATP-binding</keyword>
<keyword id="KW-0143">Chaperone</keyword>
<keyword id="KW-0963">Cytoplasm</keyword>
<keyword id="KW-0413">Isomerase</keyword>
<keyword id="KW-0547">Nucleotide-binding</keyword>